<comment type="function">
    <text evidence="1">Catalyzes the reversible conversion of 2-phosphoglycerate (2-PG) into phosphoenolpyruvate (PEP). It is essential for the degradation of carbohydrates via glycolysis.</text>
</comment>
<comment type="catalytic activity">
    <reaction evidence="1">
        <text>(2R)-2-phosphoglycerate = phosphoenolpyruvate + H2O</text>
        <dbReference type="Rhea" id="RHEA:10164"/>
        <dbReference type="ChEBI" id="CHEBI:15377"/>
        <dbReference type="ChEBI" id="CHEBI:58289"/>
        <dbReference type="ChEBI" id="CHEBI:58702"/>
        <dbReference type="EC" id="4.2.1.11"/>
    </reaction>
</comment>
<comment type="cofactor">
    <cofactor evidence="1 4">
        <name>Mg(2+)</name>
        <dbReference type="ChEBI" id="CHEBI:18420"/>
    </cofactor>
    <text evidence="1 3">Binds a second Mg(2+) ion via substrate during catalysis.</text>
</comment>
<comment type="pathway">
    <text evidence="1">Carbohydrate degradation; glycolysis; pyruvate from D-glyceraldehyde 3-phosphate: step 4/5.</text>
</comment>
<comment type="subunit">
    <text evidence="1 2">Homodimer (Ref.2). Component of the RNA degradosome, a multiprotein complex involved in RNA processing and mRNA degradation (By similarity).</text>
</comment>
<comment type="subcellular location">
    <subcellularLocation>
        <location evidence="1">Cytoplasm</location>
    </subcellularLocation>
    <subcellularLocation>
        <location evidence="1">Secreted</location>
    </subcellularLocation>
    <subcellularLocation>
        <location evidence="1">Cell surface</location>
    </subcellularLocation>
    <text evidence="1">Fractions of enolase are present in both the cytoplasm and on the cell surface.</text>
</comment>
<comment type="similarity">
    <text evidence="1">Belongs to the enolase family.</text>
</comment>
<feature type="chain" id="PRO_0000133909" description="Enolase">
    <location>
        <begin position="1"/>
        <end position="422"/>
    </location>
</feature>
<feature type="active site" description="Proton donor" evidence="1">
    <location>
        <position position="204"/>
    </location>
</feature>
<feature type="active site" description="Proton acceptor" evidence="1">
    <location>
        <position position="336"/>
    </location>
</feature>
<feature type="binding site" evidence="4">
    <location>
        <position position="41"/>
    </location>
    <ligand>
        <name>Mg(2+)</name>
        <dbReference type="ChEBI" id="CHEBI:18420"/>
        <label>1</label>
    </ligand>
</feature>
<feature type="binding site" evidence="4">
    <location>
        <position position="41"/>
    </location>
    <ligand>
        <name>Mg(2+)</name>
        <dbReference type="ChEBI" id="CHEBI:18420"/>
        <label>2</label>
    </ligand>
</feature>
<feature type="binding site" evidence="4">
    <location>
        <position position="163"/>
    </location>
    <ligand>
        <name>(2R)-2-phosphoglycerate</name>
        <dbReference type="ChEBI" id="CHEBI:58289"/>
    </ligand>
</feature>
<feature type="binding site" evidence="1 4">
    <location>
        <position position="241"/>
    </location>
    <ligand>
        <name>Mg(2+)</name>
        <dbReference type="ChEBI" id="CHEBI:18420"/>
        <label>1</label>
    </ligand>
</feature>
<feature type="binding site" evidence="4">
    <location>
        <position position="241"/>
    </location>
    <ligand>
        <name>Mg(2+)</name>
        <dbReference type="ChEBI" id="CHEBI:18420"/>
        <label>2</label>
    </ligand>
</feature>
<feature type="binding site" evidence="1 4">
    <location>
        <position position="284"/>
    </location>
    <ligand>
        <name>Mg(2+)</name>
        <dbReference type="ChEBI" id="CHEBI:18420"/>
        <label>1</label>
    </ligand>
</feature>
<feature type="binding site" evidence="4">
    <location>
        <position position="284"/>
    </location>
    <ligand>
        <name>Mg(2+)</name>
        <dbReference type="ChEBI" id="CHEBI:18420"/>
        <label>2</label>
    </ligand>
</feature>
<feature type="binding site" evidence="1 4">
    <location>
        <position position="311"/>
    </location>
    <ligand>
        <name>Mg(2+)</name>
        <dbReference type="ChEBI" id="CHEBI:18420"/>
        <label>1</label>
    </ligand>
</feature>
<feature type="binding site" evidence="4">
    <location>
        <position position="311"/>
    </location>
    <ligand>
        <name>Mg(2+)</name>
        <dbReference type="ChEBI" id="CHEBI:18420"/>
        <label>2</label>
    </ligand>
</feature>
<feature type="binding site" evidence="1 4">
    <location>
        <position position="365"/>
    </location>
    <ligand>
        <name>(2R)-2-phosphoglycerate</name>
        <dbReference type="ChEBI" id="CHEBI:58289"/>
    </ligand>
</feature>
<feature type="binding site" evidence="1 4">
    <location>
        <position position="366"/>
    </location>
    <ligand>
        <name>(2R)-2-phosphoglycerate</name>
        <dbReference type="ChEBI" id="CHEBI:58289"/>
    </ligand>
</feature>
<feature type="binding site" evidence="1 4">
    <location>
        <position position="387"/>
    </location>
    <ligand>
        <name>(2R)-2-phosphoglycerate</name>
        <dbReference type="ChEBI" id="CHEBI:58289"/>
    </ligand>
</feature>
<feature type="strand" evidence="5">
    <location>
        <begin position="2"/>
        <end position="12"/>
    </location>
</feature>
<feature type="strand" evidence="5">
    <location>
        <begin position="18"/>
        <end position="26"/>
    </location>
</feature>
<feature type="strand" evidence="5">
    <location>
        <begin position="31"/>
        <end position="35"/>
    </location>
</feature>
<feature type="helix" evidence="5">
    <location>
        <begin position="58"/>
        <end position="60"/>
    </location>
</feature>
<feature type="helix" evidence="5">
    <location>
        <begin position="64"/>
        <end position="71"/>
    </location>
</feature>
<feature type="helix" evidence="5">
    <location>
        <begin position="73"/>
        <end position="78"/>
    </location>
</feature>
<feature type="strand" evidence="5">
    <location>
        <begin position="82"/>
        <end position="84"/>
    </location>
</feature>
<feature type="helix" evidence="5">
    <location>
        <begin position="86"/>
        <end position="97"/>
    </location>
</feature>
<feature type="turn" evidence="5">
    <location>
        <begin position="103"/>
        <end position="105"/>
    </location>
</feature>
<feature type="helix" evidence="5">
    <location>
        <begin position="107"/>
        <end position="125"/>
    </location>
</feature>
<feature type="helix" evidence="5">
    <location>
        <begin position="129"/>
        <end position="133"/>
    </location>
</feature>
<feature type="strand" evidence="5">
    <location>
        <begin position="146"/>
        <end position="150"/>
    </location>
</feature>
<feature type="helix" evidence="5">
    <location>
        <begin position="152"/>
        <end position="154"/>
    </location>
</feature>
<feature type="strand" evidence="5">
    <location>
        <begin position="156"/>
        <end position="158"/>
    </location>
</feature>
<feature type="strand" evidence="5">
    <location>
        <begin position="161"/>
        <end position="167"/>
    </location>
</feature>
<feature type="helix" evidence="5">
    <location>
        <begin position="174"/>
        <end position="194"/>
    </location>
</feature>
<feature type="helix" evidence="5">
    <location>
        <begin position="214"/>
        <end position="227"/>
    </location>
</feature>
<feature type="turn" evidence="5">
    <location>
        <begin position="233"/>
        <end position="235"/>
    </location>
</feature>
<feature type="strand" evidence="5">
    <location>
        <begin position="236"/>
        <end position="241"/>
    </location>
</feature>
<feature type="helix" evidence="5">
    <location>
        <begin position="244"/>
        <end position="246"/>
    </location>
</feature>
<feature type="strand" evidence="5">
    <location>
        <begin position="252"/>
        <end position="255"/>
    </location>
</feature>
<feature type="helix" evidence="5">
    <location>
        <begin position="256"/>
        <end position="258"/>
    </location>
</feature>
<feature type="strand" evidence="5">
    <location>
        <begin position="260"/>
        <end position="262"/>
    </location>
</feature>
<feature type="helix" evidence="5">
    <location>
        <begin position="264"/>
        <end position="277"/>
    </location>
</feature>
<feature type="strand" evidence="5">
    <location>
        <begin position="280"/>
        <end position="285"/>
    </location>
</feature>
<feature type="helix" evidence="5">
    <location>
        <begin position="292"/>
        <end position="302"/>
    </location>
</feature>
<feature type="turn" evidence="5">
    <location>
        <begin position="303"/>
        <end position="305"/>
    </location>
</feature>
<feature type="strand" evidence="5">
    <location>
        <begin position="306"/>
        <end position="311"/>
    </location>
</feature>
<feature type="turn" evidence="5">
    <location>
        <begin position="312"/>
        <end position="316"/>
    </location>
</feature>
<feature type="helix" evidence="5">
    <location>
        <begin position="318"/>
        <end position="327"/>
    </location>
</feature>
<feature type="strand" evidence="5">
    <location>
        <begin position="331"/>
        <end position="335"/>
    </location>
</feature>
<feature type="helix" evidence="5">
    <location>
        <begin position="337"/>
        <end position="340"/>
    </location>
</feature>
<feature type="helix" evidence="5">
    <location>
        <begin position="343"/>
        <end position="355"/>
    </location>
</feature>
<feature type="strand" evidence="5">
    <location>
        <begin position="359"/>
        <end position="363"/>
    </location>
</feature>
<feature type="helix" evidence="5">
    <location>
        <begin position="373"/>
        <end position="381"/>
    </location>
</feature>
<feature type="strand" evidence="5">
    <location>
        <begin position="385"/>
        <end position="387"/>
    </location>
</feature>
<feature type="strand" evidence="5">
    <location>
        <begin position="391"/>
        <end position="393"/>
    </location>
</feature>
<feature type="helix" evidence="5">
    <location>
        <begin position="394"/>
        <end position="410"/>
    </location>
</feature>
<feature type="helix" evidence="5">
    <location>
        <begin position="416"/>
        <end position="420"/>
    </location>
</feature>
<organism>
    <name type="scientific">Legionella pneumophila subsp. pneumophila (strain Philadelphia 1 / ATCC 33152 / DSM 7513)</name>
    <dbReference type="NCBI Taxonomy" id="272624"/>
    <lineage>
        <taxon>Bacteria</taxon>
        <taxon>Pseudomonadati</taxon>
        <taxon>Pseudomonadota</taxon>
        <taxon>Gammaproteobacteria</taxon>
        <taxon>Legionellales</taxon>
        <taxon>Legionellaceae</taxon>
        <taxon>Legionella</taxon>
    </lineage>
</organism>
<protein>
    <recommendedName>
        <fullName evidence="1">Enolase</fullName>
        <ecNumber evidence="1">4.2.1.11</ecNumber>
    </recommendedName>
    <alternativeName>
        <fullName evidence="1">2-phospho-D-glycerate hydro-lyase</fullName>
    </alternativeName>
    <alternativeName>
        <fullName evidence="1">2-phosphoglycerate dehydratase</fullName>
    </alternativeName>
</protein>
<dbReference type="EC" id="4.2.1.11" evidence="1"/>
<dbReference type="EMBL" id="AE017354">
    <property type="protein sequence ID" value="AAU28106.1"/>
    <property type="molecule type" value="Genomic_DNA"/>
</dbReference>
<dbReference type="RefSeq" id="YP_096053.1">
    <property type="nucleotide sequence ID" value="NC_002942.5"/>
</dbReference>
<dbReference type="PDB" id="6NB2">
    <property type="method" value="X-ray"/>
    <property type="resolution" value="1.85 A"/>
    <property type="chains" value="A/B=1-422"/>
</dbReference>
<dbReference type="PDBsum" id="6NB2"/>
<dbReference type="SMR" id="Q5ZTX1"/>
<dbReference type="STRING" id="272624.lpg2037"/>
<dbReference type="PaxDb" id="272624-lpg2037"/>
<dbReference type="KEGG" id="lpn:lpg2037"/>
<dbReference type="PATRIC" id="fig|272624.6.peg.2134"/>
<dbReference type="eggNOG" id="COG0148">
    <property type="taxonomic scope" value="Bacteria"/>
</dbReference>
<dbReference type="HOGENOM" id="CLU_031223_2_1_6"/>
<dbReference type="OrthoDB" id="9804716at2"/>
<dbReference type="UniPathway" id="UPA00109">
    <property type="reaction ID" value="UER00187"/>
</dbReference>
<dbReference type="Proteomes" id="UP000000609">
    <property type="component" value="Chromosome"/>
</dbReference>
<dbReference type="GO" id="GO:0009986">
    <property type="term" value="C:cell surface"/>
    <property type="evidence" value="ECO:0007669"/>
    <property type="project" value="UniProtKB-SubCell"/>
</dbReference>
<dbReference type="GO" id="GO:0005576">
    <property type="term" value="C:extracellular region"/>
    <property type="evidence" value="ECO:0007669"/>
    <property type="project" value="UniProtKB-SubCell"/>
</dbReference>
<dbReference type="GO" id="GO:0000015">
    <property type="term" value="C:phosphopyruvate hydratase complex"/>
    <property type="evidence" value="ECO:0007669"/>
    <property type="project" value="InterPro"/>
</dbReference>
<dbReference type="GO" id="GO:0000287">
    <property type="term" value="F:magnesium ion binding"/>
    <property type="evidence" value="ECO:0007669"/>
    <property type="project" value="UniProtKB-UniRule"/>
</dbReference>
<dbReference type="GO" id="GO:0004634">
    <property type="term" value="F:phosphopyruvate hydratase activity"/>
    <property type="evidence" value="ECO:0007669"/>
    <property type="project" value="UniProtKB-UniRule"/>
</dbReference>
<dbReference type="GO" id="GO:0006096">
    <property type="term" value="P:glycolytic process"/>
    <property type="evidence" value="ECO:0007669"/>
    <property type="project" value="UniProtKB-UniRule"/>
</dbReference>
<dbReference type="CDD" id="cd03313">
    <property type="entry name" value="enolase"/>
    <property type="match status" value="1"/>
</dbReference>
<dbReference type="FunFam" id="3.30.390.10:FF:000001">
    <property type="entry name" value="Enolase"/>
    <property type="match status" value="1"/>
</dbReference>
<dbReference type="Gene3D" id="3.20.20.120">
    <property type="entry name" value="Enolase-like C-terminal domain"/>
    <property type="match status" value="1"/>
</dbReference>
<dbReference type="Gene3D" id="3.30.390.10">
    <property type="entry name" value="Enolase-like, N-terminal domain"/>
    <property type="match status" value="1"/>
</dbReference>
<dbReference type="HAMAP" id="MF_00318">
    <property type="entry name" value="Enolase"/>
    <property type="match status" value="1"/>
</dbReference>
<dbReference type="InterPro" id="IPR000941">
    <property type="entry name" value="Enolase"/>
</dbReference>
<dbReference type="InterPro" id="IPR036849">
    <property type="entry name" value="Enolase-like_C_sf"/>
</dbReference>
<dbReference type="InterPro" id="IPR029017">
    <property type="entry name" value="Enolase-like_N"/>
</dbReference>
<dbReference type="InterPro" id="IPR020810">
    <property type="entry name" value="Enolase_C"/>
</dbReference>
<dbReference type="InterPro" id="IPR020809">
    <property type="entry name" value="Enolase_CS"/>
</dbReference>
<dbReference type="InterPro" id="IPR020811">
    <property type="entry name" value="Enolase_N"/>
</dbReference>
<dbReference type="NCBIfam" id="TIGR01060">
    <property type="entry name" value="eno"/>
    <property type="match status" value="1"/>
</dbReference>
<dbReference type="PANTHER" id="PTHR11902">
    <property type="entry name" value="ENOLASE"/>
    <property type="match status" value="1"/>
</dbReference>
<dbReference type="PANTHER" id="PTHR11902:SF1">
    <property type="entry name" value="ENOLASE"/>
    <property type="match status" value="1"/>
</dbReference>
<dbReference type="Pfam" id="PF00113">
    <property type="entry name" value="Enolase_C"/>
    <property type="match status" value="1"/>
</dbReference>
<dbReference type="Pfam" id="PF03952">
    <property type="entry name" value="Enolase_N"/>
    <property type="match status" value="1"/>
</dbReference>
<dbReference type="PIRSF" id="PIRSF001400">
    <property type="entry name" value="Enolase"/>
    <property type="match status" value="1"/>
</dbReference>
<dbReference type="PRINTS" id="PR00148">
    <property type="entry name" value="ENOLASE"/>
</dbReference>
<dbReference type="SFLD" id="SFLDS00001">
    <property type="entry name" value="Enolase"/>
    <property type="match status" value="1"/>
</dbReference>
<dbReference type="SFLD" id="SFLDF00002">
    <property type="entry name" value="enolase"/>
    <property type="match status" value="1"/>
</dbReference>
<dbReference type="SMART" id="SM01192">
    <property type="entry name" value="Enolase_C"/>
    <property type="match status" value="1"/>
</dbReference>
<dbReference type="SMART" id="SM01193">
    <property type="entry name" value="Enolase_N"/>
    <property type="match status" value="1"/>
</dbReference>
<dbReference type="SUPFAM" id="SSF51604">
    <property type="entry name" value="Enolase C-terminal domain-like"/>
    <property type="match status" value="1"/>
</dbReference>
<dbReference type="SUPFAM" id="SSF54826">
    <property type="entry name" value="Enolase N-terminal domain-like"/>
    <property type="match status" value="1"/>
</dbReference>
<dbReference type="PROSITE" id="PS00164">
    <property type="entry name" value="ENOLASE"/>
    <property type="match status" value="1"/>
</dbReference>
<sequence length="422" mass="46217">MHIHKIQAREILDSRGNPTIEADVTLTTGIIGRASVPSGASTGSREACELRDNDPKRYAGKGVQKAVKHVNNEINQALQGLSVEDQENLDRILCQLDNTENKSHLGANAILATSLACARARALSLNQPLYMTLNQGDMMTMPVPMMNILNGGAHADNNVDIQEFMIMPIGAPDFPVALQMGTEIFHVLKSVLKKQGLNTAVGDEGGFAPNIQSNRQALDLLSEAIEKAGFRLGEDIVFALDVAASELFNEGFYHMYSENQKFDSHQLIEYYANLISSYPIVSIEDGLDEKDWSGWKQLTTHLGNKVQLVGDDLFVTNPKILREGIAQGIANAILIKVNQIGTLSETRQAIKLAYDNGYRCVMSHRSGETEDTFIADLAVASGCGQIKTGSLCRTDRTAKYNQLLRINELASLPYAGKNILKR</sequence>
<gene>
    <name evidence="1" type="primary">eno</name>
    <name type="ordered locus">lpg2037</name>
</gene>
<name>ENO_LEGPH</name>
<proteinExistence type="evidence at protein level"/>
<accession>Q5ZTX1</accession>
<keyword id="KW-0002">3D-structure</keyword>
<keyword id="KW-0963">Cytoplasm</keyword>
<keyword id="KW-0324">Glycolysis</keyword>
<keyword id="KW-0456">Lyase</keyword>
<keyword id="KW-0460">Magnesium</keyword>
<keyword id="KW-0479">Metal-binding</keyword>
<keyword id="KW-1185">Reference proteome</keyword>
<keyword id="KW-0964">Secreted</keyword>
<reference key="1">
    <citation type="journal article" date="2004" name="Science">
        <title>The genomic sequence of the accidental pathogen Legionella pneumophila.</title>
        <authorList>
            <person name="Chien M."/>
            <person name="Morozova I."/>
            <person name="Shi S."/>
            <person name="Sheng H."/>
            <person name="Chen J."/>
            <person name="Gomez S.M."/>
            <person name="Asamani G."/>
            <person name="Hill K."/>
            <person name="Nuara J."/>
            <person name="Feder M."/>
            <person name="Rineer J."/>
            <person name="Greenberg J.J."/>
            <person name="Steshenko V."/>
            <person name="Park S.H."/>
            <person name="Zhao B."/>
            <person name="Teplitskaya E."/>
            <person name="Edwards J.R."/>
            <person name="Pampou S."/>
            <person name="Georghiou A."/>
            <person name="Chou I.-C."/>
            <person name="Iannuccilli W."/>
            <person name="Ulz M.E."/>
            <person name="Kim D.H."/>
            <person name="Geringer-Sameth A."/>
            <person name="Goldsberry C."/>
            <person name="Morozov P."/>
            <person name="Fischer S.G."/>
            <person name="Segal G."/>
            <person name="Qu X."/>
            <person name="Rzhetsky A."/>
            <person name="Zhang P."/>
            <person name="Cayanis E."/>
            <person name="De Jong P.J."/>
            <person name="Ju J."/>
            <person name="Kalachikov S."/>
            <person name="Shuman H.A."/>
            <person name="Russo J.J."/>
        </authorList>
    </citation>
    <scope>NUCLEOTIDE SEQUENCE [LARGE SCALE GENOMIC DNA]</scope>
    <source>
        <strain>Philadelphia 1 / ATCC 33152 / DSM 7513</strain>
    </source>
</reference>
<reference evidence="4" key="2">
    <citation type="submission" date="2018-12" db="PDB data bank">
        <title>Crystal structure of enolase from Legionella pneumophila bound to 2-phosphoglyceric acid and magnesium.</title>
        <authorList>
            <person name="Davies D.R."/>
            <person name="Abendroth J."/>
            <person name="Lorimer D.D."/>
            <person name="Edwards T.E."/>
        </authorList>
    </citation>
    <scope>X-RAY CRYSTALLOGRAPHY (1.85 ANGSTROMS) IN COMPLEX WITH 2-PHOSPHOGLYCERIC ACID AND MG(2+)</scope>
    <scope>SUBUNIT</scope>
</reference>
<evidence type="ECO:0000255" key="1">
    <source>
        <dbReference type="HAMAP-Rule" id="MF_00318"/>
    </source>
</evidence>
<evidence type="ECO:0000269" key="2">
    <source ref="2"/>
</evidence>
<evidence type="ECO:0000305" key="3">
    <source ref="2"/>
</evidence>
<evidence type="ECO:0007744" key="4">
    <source>
        <dbReference type="PDB" id="6NB2"/>
    </source>
</evidence>
<evidence type="ECO:0007829" key="5">
    <source>
        <dbReference type="PDB" id="6NB2"/>
    </source>
</evidence>